<organism>
    <name type="scientific">Streptococcus pneumoniae serotype 19F (strain G54)</name>
    <dbReference type="NCBI Taxonomy" id="512566"/>
    <lineage>
        <taxon>Bacteria</taxon>
        <taxon>Bacillati</taxon>
        <taxon>Bacillota</taxon>
        <taxon>Bacilli</taxon>
        <taxon>Lactobacillales</taxon>
        <taxon>Streptococcaceae</taxon>
        <taxon>Streptococcus</taxon>
    </lineage>
</organism>
<protein>
    <recommendedName>
        <fullName evidence="1">V-type ATP synthase beta chain</fullName>
    </recommendedName>
    <alternativeName>
        <fullName evidence="1">V-ATPase subunit B</fullName>
    </alternativeName>
</protein>
<gene>
    <name evidence="1" type="primary">atpB</name>
    <name type="ordered locus">SPG_1209</name>
</gene>
<sequence length="461" mass="51595">MSVIKEYRTASEVVGPLMIVEQVNNVSYNELVEIQLHNGEIRRGQVLEIHEDKAMVQLFEGSSGINLEKSKIRFAGHALELAVSEDMVGRIFNGMGKPIDGGPDLIPEKYLDIDGQAINPVSRDYPDEFIQTGISSIDHLNTLVRGQKLPVFSGSGLPHNELAAQIARQATVLNSDENFAVVFAAMGITFEEAEFFMEELRKTGAIDRSVLFMNLANDPAIERIATPRIALTAAEYLAFEKDMHVLVIMTDMTNYCEALREVSAARREVPGRRGYPGYLYTNLSTLYERAGRLVGKKGSVTQIPILTMPEDDITHPIPDLTGYITEGQIILSHELYNQGYRPPINVLPSLSRLKDKGSGEGKTRGDHAPTMNQLFAAYAQGKKVEELAVVLGESALSDVDKLYVRFTKRFEEEYINQGFYKNRNIEDTLNLGWELLSILPRTELKRIKDDLLDKYLPLVEV</sequence>
<evidence type="ECO:0000255" key="1">
    <source>
        <dbReference type="HAMAP-Rule" id="MF_00310"/>
    </source>
</evidence>
<proteinExistence type="inferred from homology"/>
<comment type="function">
    <text evidence="1">Produces ATP from ADP in the presence of a proton gradient across the membrane. The V-type beta chain is a regulatory subunit.</text>
</comment>
<comment type="similarity">
    <text evidence="1">Belongs to the ATPase alpha/beta chains family.</text>
</comment>
<dbReference type="EMBL" id="CP001015">
    <property type="protein sequence ID" value="ACF56557.1"/>
    <property type="molecule type" value="Genomic_DNA"/>
</dbReference>
<dbReference type="SMR" id="B5E551"/>
<dbReference type="KEGG" id="spx:SPG_1209"/>
<dbReference type="HOGENOM" id="CLU_022916_0_0_9"/>
<dbReference type="GO" id="GO:0005524">
    <property type="term" value="F:ATP binding"/>
    <property type="evidence" value="ECO:0007669"/>
    <property type="project" value="UniProtKB-UniRule"/>
</dbReference>
<dbReference type="GO" id="GO:0046933">
    <property type="term" value="F:proton-transporting ATP synthase activity, rotational mechanism"/>
    <property type="evidence" value="ECO:0007669"/>
    <property type="project" value="UniProtKB-UniRule"/>
</dbReference>
<dbReference type="GO" id="GO:0042777">
    <property type="term" value="P:proton motive force-driven plasma membrane ATP synthesis"/>
    <property type="evidence" value="ECO:0007669"/>
    <property type="project" value="UniProtKB-UniRule"/>
</dbReference>
<dbReference type="CDD" id="cd18112">
    <property type="entry name" value="ATP-synt_V_A-type_beta_C"/>
    <property type="match status" value="1"/>
</dbReference>
<dbReference type="CDD" id="cd18118">
    <property type="entry name" value="ATP-synt_V_A-type_beta_N"/>
    <property type="match status" value="1"/>
</dbReference>
<dbReference type="CDD" id="cd01135">
    <property type="entry name" value="V_A-ATPase_B"/>
    <property type="match status" value="1"/>
</dbReference>
<dbReference type="Gene3D" id="3.40.50.12240">
    <property type="match status" value="1"/>
</dbReference>
<dbReference type="HAMAP" id="MF_00310">
    <property type="entry name" value="ATP_synth_B_arch"/>
    <property type="match status" value="1"/>
</dbReference>
<dbReference type="InterPro" id="IPR055190">
    <property type="entry name" value="ATP-synt_VA_C"/>
</dbReference>
<dbReference type="InterPro" id="IPR020003">
    <property type="entry name" value="ATPase_a/bsu_AS"/>
</dbReference>
<dbReference type="InterPro" id="IPR004100">
    <property type="entry name" value="ATPase_F1/V1/A1_a/bsu_N"/>
</dbReference>
<dbReference type="InterPro" id="IPR000194">
    <property type="entry name" value="ATPase_F1/V1/A1_a/bsu_nucl-bd"/>
</dbReference>
<dbReference type="InterPro" id="IPR027417">
    <property type="entry name" value="P-loop_NTPase"/>
</dbReference>
<dbReference type="InterPro" id="IPR022879">
    <property type="entry name" value="V-ATPase_su_B/beta"/>
</dbReference>
<dbReference type="NCBIfam" id="NF003235">
    <property type="entry name" value="PRK04196.1"/>
    <property type="match status" value="1"/>
</dbReference>
<dbReference type="PANTHER" id="PTHR43389">
    <property type="entry name" value="V-TYPE PROTON ATPASE SUBUNIT B"/>
    <property type="match status" value="1"/>
</dbReference>
<dbReference type="PANTHER" id="PTHR43389:SF4">
    <property type="entry name" value="V-TYPE PROTON ATPASE SUBUNIT B"/>
    <property type="match status" value="1"/>
</dbReference>
<dbReference type="Pfam" id="PF00006">
    <property type="entry name" value="ATP-synt_ab"/>
    <property type="match status" value="1"/>
</dbReference>
<dbReference type="Pfam" id="PF02874">
    <property type="entry name" value="ATP-synt_ab_N"/>
    <property type="match status" value="1"/>
</dbReference>
<dbReference type="Pfam" id="PF22919">
    <property type="entry name" value="ATP-synt_VA_C"/>
    <property type="match status" value="1"/>
</dbReference>
<dbReference type="PIRSF" id="PIRSF039114">
    <property type="entry name" value="V-ATPsynth_beta/V-ATPase_B"/>
    <property type="match status" value="1"/>
</dbReference>
<dbReference type="SUPFAM" id="SSF47917">
    <property type="entry name" value="C-terminal domain of alpha and beta subunits of F1 ATP synthase"/>
    <property type="match status" value="1"/>
</dbReference>
<dbReference type="SUPFAM" id="SSF52540">
    <property type="entry name" value="P-loop containing nucleoside triphosphate hydrolases"/>
    <property type="match status" value="1"/>
</dbReference>
<dbReference type="PROSITE" id="PS00152">
    <property type="entry name" value="ATPASE_ALPHA_BETA"/>
    <property type="match status" value="1"/>
</dbReference>
<name>VATB_STRP4</name>
<reference key="1">
    <citation type="journal article" date="2001" name="Microb. Drug Resist.">
        <title>Annotated draft genomic sequence from a Streptococcus pneumoniae type 19F clinical isolate.</title>
        <authorList>
            <person name="Dopazo J."/>
            <person name="Mendoza A."/>
            <person name="Herrero J."/>
            <person name="Caldara F."/>
            <person name="Humbert Y."/>
            <person name="Friedli L."/>
            <person name="Guerrier M."/>
            <person name="Grand-Schenk E."/>
            <person name="Gandin C."/>
            <person name="de Francesco M."/>
            <person name="Polissi A."/>
            <person name="Buell G."/>
            <person name="Feger G."/>
            <person name="Garcia E."/>
            <person name="Peitsch M."/>
            <person name="Garcia-Bustos J.F."/>
        </authorList>
    </citation>
    <scope>NUCLEOTIDE SEQUENCE [LARGE SCALE GENOMIC DNA]</scope>
    <source>
        <strain>G54</strain>
    </source>
</reference>
<reference key="2">
    <citation type="submission" date="2008-03" db="EMBL/GenBank/DDBJ databases">
        <title>Pneumococcal beta glucoside metabolism investigated by whole genome comparison.</title>
        <authorList>
            <person name="Mulas L."/>
            <person name="Trappetti C."/>
            <person name="Hakenbeck R."/>
            <person name="Iannelli F."/>
            <person name="Pozzi G."/>
            <person name="Davidsen T.M."/>
            <person name="Tettelin H."/>
            <person name="Oggioni M."/>
        </authorList>
    </citation>
    <scope>NUCLEOTIDE SEQUENCE [LARGE SCALE GENOMIC DNA]</scope>
    <source>
        <strain>G54</strain>
    </source>
</reference>
<keyword id="KW-0066">ATP synthesis</keyword>
<keyword id="KW-0375">Hydrogen ion transport</keyword>
<keyword id="KW-0406">Ion transport</keyword>
<keyword id="KW-0813">Transport</keyword>
<feature type="chain" id="PRO_1000115663" description="V-type ATP synthase beta chain">
    <location>
        <begin position="1"/>
        <end position="461"/>
    </location>
</feature>
<accession>B5E551</accession>